<reference evidence="10" key="1">
    <citation type="journal article" date="2014" name="Curr. Biol.">
        <title>Function of the Male-Gamete-Specific Fusion Protein HAP2 in a Seven-Sexed Ciliate.</title>
        <authorList>
            <person name="Cole E.S."/>
            <person name="Cassidy-Hanley D."/>
            <person name="Fricke Pinello J."/>
            <person name="Zeng H."/>
            <person name="Hsueh M."/>
            <person name="Kolbin D."/>
            <person name="Ozzello C."/>
            <person name="Giddings T. Jr."/>
            <person name="Winey M."/>
            <person name="Clark T.G."/>
        </authorList>
    </citation>
    <scope>NUCLEOTIDE SEQUENCE [MRNA]</scope>
    <scope>DEVELOPMENTAL STAGE</scope>
    <scope>FUNCTION</scope>
    <scope>SUBCELLULAR LOCATION</scope>
</reference>
<reference key="2">
    <citation type="journal article" date="2010" name="Trends Cell Biol.">
        <title>Is HAP2-GCS1 an ancestral gamete fusogen?</title>
        <authorList>
            <person name="Wong J.L."/>
            <person name="Johnson M.A."/>
        </authorList>
    </citation>
    <scope>REVIEW</scope>
</reference>
<reference key="3">
    <citation type="journal article" date="2017" name="Curr. Biol.">
        <title>Structure-Function Studies Link Class II Viral Fusogens with the Ancestral Gamete Fusion Protein HAP2.</title>
        <authorList>
            <person name="Pinello J.F."/>
            <person name="Lai A.L."/>
            <person name="Millet J.K."/>
            <person name="Cassidy-Hanley D."/>
            <person name="Freed J.H."/>
            <person name="Clark T.G."/>
        </authorList>
    </citation>
    <scope>FUNCTION</scope>
    <scope>REGION</scope>
    <scope>DOMAIN</scope>
    <scope>MUTAGENESIS OF 131-PHE--TYR-133; 147-CYS-CYS-148; 152-LEU--THR-179; ARG-164 AND 171-LEU--LEU-173</scope>
</reference>
<keyword id="KW-0965">Cell junction</keyword>
<keyword id="KW-1003">Cell membrane</keyword>
<keyword id="KW-1015">Disulfide bond</keyword>
<keyword id="KW-0278">Fertilization</keyword>
<keyword id="KW-0446">Lipid-binding</keyword>
<keyword id="KW-0472">Membrane</keyword>
<keyword id="KW-0732">Signal</keyword>
<keyword id="KW-0812">Transmembrane</keyword>
<keyword id="KW-1133">Transmembrane helix</keyword>
<sequence length="742" mass="82663">MKFLAFGLIYFHFCILNRCEYITSSTIQKCYNSSNEPNNCSQKAVIVLSLENGQIANTEQVVATLNQLSDSGVNKQLQNSFIFEVTKSPVTALFPLIYLQDFNSQPLEQVIATTLFSCKDGFYDSSPTCKFQYDSKGQKILDSQGYCCYCSLSDILGMGNDLSRGKVCYALNLGAGSATAHCLKFSPLWYSAFKIQQYQLYFEVNINIYTVDSQNQKNLKQTLKLSTSNPTMKSSDNSTISKIIGTFTPTQPPADLSSYYLVKPSFPATDPRVLQGISSWMFVDKTMFTLDGTQCNKIGVSYSGFRQQSSSCSQPVGSCLQNQLENLYQSDLILLSQNKQPKYLLESQGNFNQVQFQGQTILQQGLSGSASTLITIEIDAAQIKFVTNLGIGCISQCSINNFESHSGNGKLVALVQNQGNYSAEFVLGFNCSSNVQPIQGQKLFLTANQLYNFNCSVSVNSDISAINNNCTINLYDAIGNQLDSKNILFNTTSTNHTSNQGNNTGQQQSSQEYKSSQSCSDKCSSFWSFWCYFSAGCIKEAFKSIASIAGVASALALVIFLAKNGYLVPIIRFLCCCCCKSKKKENEKNKDKTDKKSIQESCSYDRSCCSHSISQSYQVENKNKYKRSKIQRSFSSESCQDKSKKIINELSNLEETFEANKLYANIDKNSSIFEYFGFKKSFTFILYERNDILFLPQNSTILDMIGALQPQKGSYLAQKFLEIVNKNALKVVSTSPLYLLIE</sequence>
<feature type="signal peptide" evidence="2">
    <location>
        <begin position="1"/>
        <end position="19"/>
    </location>
</feature>
<feature type="chain" id="PRO_5001584807" description="Hapless 2" evidence="2">
    <location>
        <begin position="20"/>
        <end position="742"/>
    </location>
</feature>
<feature type="topological domain" description="Extracellular" evidence="7">
    <location>
        <begin position="20"/>
        <end position="540"/>
    </location>
</feature>
<feature type="transmembrane region" description="Helical" evidence="2">
    <location>
        <begin position="541"/>
        <end position="561"/>
    </location>
</feature>
<feature type="topological domain" description="Cytoplasmic" evidence="7">
    <location>
        <begin position="562"/>
        <end position="742"/>
    </location>
</feature>
<feature type="region of interest" description="Important for membrane fusion" evidence="4">
    <location>
        <begin position="152"/>
        <end position="179"/>
    </location>
</feature>
<feature type="disulfide bond" evidence="1">
    <location>
        <begin position="30"/>
        <end position="40"/>
    </location>
</feature>
<feature type="disulfide bond" evidence="1">
    <location>
        <begin position="118"/>
        <end position="147"/>
    </location>
</feature>
<feature type="disulfide bond" evidence="1">
    <location>
        <begin position="129"/>
        <end position="182"/>
    </location>
</feature>
<feature type="disulfide bond" evidence="1">
    <location>
        <begin position="148"/>
        <end position="312"/>
    </location>
</feature>
<feature type="disulfide bond" evidence="1">
    <location>
        <begin position="150"/>
        <end position="168"/>
    </location>
</feature>
<feature type="disulfide bond" evidence="1">
    <location>
        <begin position="295"/>
        <end position="319"/>
    </location>
</feature>
<feature type="disulfide bond" evidence="1">
    <location>
        <begin position="431"/>
        <end position="470"/>
    </location>
</feature>
<feature type="mutagenesis site" description="No effect." evidence="4">
    <original>FQY</original>
    <variation>AAA</variation>
    <location>
        <begin position="131"/>
        <end position="133"/>
    </location>
</feature>
<feature type="mutagenesis site" description="Loss of function in mediating cell fusion." evidence="4">
    <original>CC</original>
    <variation>SS</variation>
    <location>
        <begin position="147"/>
        <end position="148"/>
    </location>
</feature>
<feature type="mutagenesis site" description="Loss of function in mediating cell fusion." evidence="4">
    <location>
        <begin position="152"/>
        <end position="179"/>
    </location>
</feature>
<feature type="mutagenesis site" description="No effect." evidence="4">
    <original>R</original>
    <variation>A</variation>
    <location>
        <position position="164"/>
    </location>
</feature>
<feature type="mutagenesis site" description="No effect." evidence="4">
    <original>LNL</original>
    <variation>AAA</variation>
    <location>
        <begin position="171"/>
        <end position="173"/>
    </location>
</feature>
<dbReference type="EMBL" id="KJ629172">
    <property type="protein sequence ID" value="AIA57699.1"/>
    <property type="molecule type" value="mRNA"/>
</dbReference>
<dbReference type="SMR" id="A0A060A682"/>
<dbReference type="GO" id="GO:0005911">
    <property type="term" value="C:cell-cell junction"/>
    <property type="evidence" value="ECO:0000314"/>
    <property type="project" value="UniProtKB"/>
</dbReference>
<dbReference type="GO" id="GO:0005886">
    <property type="term" value="C:plasma membrane"/>
    <property type="evidence" value="ECO:0007669"/>
    <property type="project" value="UniProtKB-SubCell"/>
</dbReference>
<dbReference type="GO" id="GO:0140522">
    <property type="term" value="F:fusogenic activity"/>
    <property type="evidence" value="ECO:0000314"/>
    <property type="project" value="GO_Central"/>
</dbReference>
<dbReference type="GO" id="GO:0008289">
    <property type="term" value="F:lipid binding"/>
    <property type="evidence" value="ECO:0007669"/>
    <property type="project" value="UniProtKB-KW"/>
</dbReference>
<dbReference type="GO" id="GO:0009566">
    <property type="term" value="P:fertilization"/>
    <property type="evidence" value="ECO:0000315"/>
    <property type="project" value="GO_Central"/>
</dbReference>
<dbReference type="GO" id="GO:0045026">
    <property type="term" value="P:plasma membrane fusion"/>
    <property type="evidence" value="ECO:0000315"/>
    <property type="project" value="UniProtKB"/>
</dbReference>
<dbReference type="GO" id="GO:0007338">
    <property type="term" value="P:single fertilization"/>
    <property type="evidence" value="ECO:0000315"/>
    <property type="project" value="UniProtKB"/>
</dbReference>
<dbReference type="InterPro" id="IPR040326">
    <property type="entry name" value="HAP2/GCS1"/>
</dbReference>
<dbReference type="InterPro" id="IPR018928">
    <property type="entry name" value="HAP2/GCS1_dom"/>
</dbReference>
<dbReference type="PANTHER" id="PTHR31764:SF0">
    <property type="entry name" value="GENERATIVE CELL SPECIFIC-1_HAP2 DOMAIN-CONTAINING PROTEIN"/>
    <property type="match status" value="1"/>
</dbReference>
<dbReference type="PANTHER" id="PTHR31764">
    <property type="entry name" value="PROTEIN HAPLESS 2"/>
    <property type="match status" value="1"/>
</dbReference>
<dbReference type="Pfam" id="PF10699">
    <property type="entry name" value="HAP2-GCS1"/>
    <property type="match status" value="1"/>
</dbReference>
<proteinExistence type="evidence at protein level"/>
<evidence type="ECO:0000250" key="1">
    <source>
        <dbReference type="UniProtKB" id="A4GRC6"/>
    </source>
</evidence>
<evidence type="ECO:0000255" key="2"/>
<evidence type="ECO:0000269" key="3">
    <source>
    </source>
</evidence>
<evidence type="ECO:0000269" key="4">
    <source>
    </source>
</evidence>
<evidence type="ECO:0000303" key="5">
    <source>
    </source>
</evidence>
<evidence type="ECO:0000303" key="6">
    <source>
    </source>
</evidence>
<evidence type="ECO:0000305" key="7"/>
<evidence type="ECO:0000305" key="8">
    <source>
    </source>
</evidence>
<evidence type="ECO:0000305" key="9">
    <source>
    </source>
</evidence>
<evidence type="ECO:0000312" key="10">
    <source>
        <dbReference type="EMBL" id="AIA57699.1"/>
    </source>
</evidence>
<gene>
    <name evidence="6 10" type="primary">HAP2</name>
    <name evidence="6" type="synonym">GCS1</name>
</gene>
<protein>
    <recommendedName>
        <fullName>Hapless 2</fullName>
    </recommendedName>
    <alternativeName>
        <fullName>Generative cell specific-1</fullName>
    </alternativeName>
</protein>
<comment type="function">
    <text evidence="3 4">During fertilization, required for the formation of intercellular membrane pores and subsequent exchange of gametic pronuclei between cells. Probably initiates the formation of intercellular membrane pores by inserting part of its extracellular domain into the cell membrane of the adjoining cell in the mating pair. Mating requires the presence of HAP2 on at least one of the two cells. Mating efficiency is high when HAP2 is present on both cells, and is strongly reduced when HAP2 is present on only one of the two cells.</text>
</comment>
<comment type="subcellular location">
    <subcellularLocation>
        <location evidence="8 9">Cell membrane</location>
        <topology evidence="2">Single-pass type I membrane protein</topology>
    </subcellularLocation>
    <subcellularLocation>
        <location evidence="3 4">Cell junction</location>
    </subcellularLocation>
    <text evidence="3 4">Detected at the mating junction.</text>
</comment>
<comment type="developmental stage">
    <text evidence="3">Detected in all seven mating types.</text>
</comment>
<comment type="domain">
    <text evidence="4">The region that is important for membrane fusion binds to lipids and can insert itself into lipid membranes. It is unstructured in an aqueous environment and assumes a more ordered, beta-stranded conformation in the presence of lipid membranes.</text>
</comment>
<comment type="miscellaneous">
    <text evidence="4 5">HAP2/GCS1 family members mediate membrane fusion between gametes in a broad range of eukaryotes, ranging from algae and higher plants to protozoans and cnidaria, suggesting they are derived from an ancestral gamete fusogen (PubMed:20080406). They function similar to viral fusogens, by inserting part of their extracellular domain into the lipid bilayer of an adjoining cell (PubMed:28238660).</text>
</comment>
<comment type="similarity">
    <text evidence="7">Belongs to the HAP2/GCS1 family.</text>
</comment>
<accession>A0A060A682</accession>
<name>HAP2_TETTH</name>
<organism evidence="10">
    <name type="scientific">Tetrahymena thermophila</name>
    <dbReference type="NCBI Taxonomy" id="5911"/>
    <lineage>
        <taxon>Eukaryota</taxon>
        <taxon>Sar</taxon>
        <taxon>Alveolata</taxon>
        <taxon>Ciliophora</taxon>
        <taxon>Intramacronucleata</taxon>
        <taxon>Oligohymenophorea</taxon>
        <taxon>Hymenostomatida</taxon>
        <taxon>Tetrahymenina</taxon>
        <taxon>Tetrahymenidae</taxon>
        <taxon>Tetrahymena</taxon>
    </lineage>
</organism>